<feature type="chain" id="PRO_0000314730" description="AMP phosphorylase">
    <location>
        <begin position="1"/>
        <end position="516"/>
    </location>
</feature>
<feature type="active site" description="Proton donor" evidence="1">
    <location>
        <position position="257"/>
    </location>
</feature>
<feature type="binding site" evidence="1">
    <location>
        <position position="169"/>
    </location>
    <ligand>
        <name>AMP</name>
        <dbReference type="ChEBI" id="CHEBI:456215"/>
    </ligand>
</feature>
<feature type="binding site" evidence="1">
    <location>
        <begin position="195"/>
        <end position="200"/>
    </location>
    <ligand>
        <name>AMP</name>
        <dbReference type="ChEBI" id="CHEBI:456215"/>
    </ligand>
</feature>
<feature type="binding site" evidence="1">
    <location>
        <position position="204"/>
    </location>
    <ligand>
        <name>AMP</name>
        <dbReference type="ChEBI" id="CHEBI:456215"/>
    </ligand>
</feature>
<feature type="binding site" evidence="1">
    <location>
        <position position="265"/>
    </location>
    <ligand>
        <name>AMP</name>
        <dbReference type="ChEBI" id="CHEBI:456215"/>
    </ligand>
</feature>
<feature type="binding site" evidence="1">
    <location>
        <position position="289"/>
    </location>
    <ligand>
        <name>AMP</name>
        <dbReference type="ChEBI" id="CHEBI:456215"/>
    </ligand>
</feature>
<reference key="1">
    <citation type="journal article" date="2016" name="Stand. Genomic Sci.">
        <title>Complete genome sequence of Methanospirillum hungatei type strain JF1.</title>
        <authorList>
            <person name="Gunsalus R.P."/>
            <person name="Cook L.E."/>
            <person name="Crable B."/>
            <person name="Rohlin L."/>
            <person name="McDonald E."/>
            <person name="Mouttaki H."/>
            <person name="Sieber J.R."/>
            <person name="Poweleit N."/>
            <person name="Zhou H."/>
            <person name="Lapidus A.L."/>
            <person name="Daligault H.E."/>
            <person name="Land M."/>
            <person name="Gilna P."/>
            <person name="Ivanova N."/>
            <person name="Kyrpides N."/>
            <person name="Culley D.E."/>
            <person name="McInerney M.J."/>
        </authorList>
    </citation>
    <scope>NUCLEOTIDE SEQUENCE [LARGE SCALE GENOMIC DNA]</scope>
    <source>
        <strain>ATCC 27890 / DSM 864 / NBRC 100397 / JF-1</strain>
    </source>
</reference>
<dbReference type="EC" id="2.4.2.57" evidence="1"/>
<dbReference type="EMBL" id="CP000254">
    <property type="protein sequence ID" value="ABD41967.1"/>
    <property type="molecule type" value="Genomic_DNA"/>
</dbReference>
<dbReference type="RefSeq" id="WP_011449225.1">
    <property type="nucleotide sequence ID" value="NC_007796.1"/>
</dbReference>
<dbReference type="SMR" id="Q2FTS5"/>
<dbReference type="FunCoup" id="Q2FTS5">
    <property type="interactions" value="25"/>
</dbReference>
<dbReference type="STRING" id="323259.Mhun_2262"/>
<dbReference type="EnsemblBacteria" id="ABD41967">
    <property type="protein sequence ID" value="ABD41967"/>
    <property type="gene ID" value="Mhun_2262"/>
</dbReference>
<dbReference type="GeneID" id="3924224"/>
<dbReference type="KEGG" id="mhu:Mhun_2262"/>
<dbReference type="eggNOG" id="arCOG02013">
    <property type="taxonomic scope" value="Archaea"/>
</dbReference>
<dbReference type="HOGENOM" id="CLU_025040_6_0_2"/>
<dbReference type="InParanoid" id="Q2FTS5"/>
<dbReference type="OrthoDB" id="9827at2157"/>
<dbReference type="Proteomes" id="UP000001941">
    <property type="component" value="Chromosome"/>
</dbReference>
<dbReference type="GO" id="GO:0005829">
    <property type="term" value="C:cytosol"/>
    <property type="evidence" value="ECO:0007669"/>
    <property type="project" value="TreeGrafter"/>
</dbReference>
<dbReference type="GO" id="GO:0004645">
    <property type="term" value="F:1,4-alpha-oligoglucan phosphorylase activity"/>
    <property type="evidence" value="ECO:0007669"/>
    <property type="project" value="InterPro"/>
</dbReference>
<dbReference type="GO" id="GO:0016208">
    <property type="term" value="F:AMP binding"/>
    <property type="evidence" value="ECO:0007669"/>
    <property type="project" value="UniProtKB-UniRule"/>
</dbReference>
<dbReference type="GO" id="GO:0016763">
    <property type="term" value="F:pentosyltransferase activity"/>
    <property type="evidence" value="ECO:0007669"/>
    <property type="project" value="UniProtKB-UniRule"/>
</dbReference>
<dbReference type="GO" id="GO:0006196">
    <property type="term" value="P:AMP catabolic process"/>
    <property type="evidence" value="ECO:0007669"/>
    <property type="project" value="UniProtKB-UniRule"/>
</dbReference>
<dbReference type="GO" id="GO:0046125">
    <property type="term" value="P:pyrimidine deoxyribonucleoside metabolic process"/>
    <property type="evidence" value="ECO:0007669"/>
    <property type="project" value="InterPro"/>
</dbReference>
<dbReference type="GO" id="GO:0006206">
    <property type="term" value="P:pyrimidine nucleobase metabolic process"/>
    <property type="evidence" value="ECO:0007669"/>
    <property type="project" value="InterPro"/>
</dbReference>
<dbReference type="Gene3D" id="1.20.970.50">
    <property type="match status" value="1"/>
</dbReference>
<dbReference type="Gene3D" id="2.40.40.20">
    <property type="match status" value="1"/>
</dbReference>
<dbReference type="Gene3D" id="3.40.1030.10">
    <property type="entry name" value="Nucleoside phosphorylase/phosphoribosyltransferase catalytic domain"/>
    <property type="match status" value="1"/>
</dbReference>
<dbReference type="Gene3D" id="3.90.1170.30">
    <property type="entry name" value="Pyrimidine nucleoside phosphorylase-like, C-terminal domain"/>
    <property type="match status" value="1"/>
</dbReference>
<dbReference type="HAMAP" id="MF_02132">
    <property type="entry name" value="AMP_phosphorylase"/>
    <property type="match status" value="1"/>
</dbReference>
<dbReference type="InterPro" id="IPR017713">
    <property type="entry name" value="AMP_phosphorylase"/>
</dbReference>
<dbReference type="InterPro" id="IPR000312">
    <property type="entry name" value="Glycosyl_Trfase_fam3"/>
</dbReference>
<dbReference type="InterPro" id="IPR017459">
    <property type="entry name" value="Glycosyl_Trfase_fam3_N_dom"/>
</dbReference>
<dbReference type="InterPro" id="IPR036320">
    <property type="entry name" value="Glycosyl_Trfase_fam3_N_dom_sf"/>
</dbReference>
<dbReference type="InterPro" id="IPR035902">
    <property type="entry name" value="Nuc_phospho_transferase"/>
</dbReference>
<dbReference type="InterPro" id="IPR036566">
    <property type="entry name" value="PYNP-like_C_sf"/>
</dbReference>
<dbReference type="InterPro" id="IPR013102">
    <property type="entry name" value="PYNP_C"/>
</dbReference>
<dbReference type="InterPro" id="IPR017872">
    <property type="entry name" value="Pyrmidine_PPase_CS"/>
</dbReference>
<dbReference type="InterPro" id="IPR013466">
    <property type="entry name" value="Thymidine/AMP_Pase"/>
</dbReference>
<dbReference type="InterPro" id="IPR000053">
    <property type="entry name" value="Thymidine/pyrmidine_PPase"/>
</dbReference>
<dbReference type="NCBIfam" id="TIGR03327">
    <property type="entry name" value="AMP_phos"/>
    <property type="match status" value="1"/>
</dbReference>
<dbReference type="NCBIfam" id="TIGR02645">
    <property type="entry name" value="ARCH_P_rylase"/>
    <property type="match status" value="1"/>
</dbReference>
<dbReference type="NCBIfam" id="NF003338">
    <property type="entry name" value="PRK04350.1"/>
    <property type="match status" value="1"/>
</dbReference>
<dbReference type="PANTHER" id="PTHR10515">
    <property type="entry name" value="THYMIDINE PHOSPHORYLASE"/>
    <property type="match status" value="1"/>
</dbReference>
<dbReference type="PANTHER" id="PTHR10515:SF0">
    <property type="entry name" value="THYMIDINE PHOSPHORYLASE"/>
    <property type="match status" value="1"/>
</dbReference>
<dbReference type="Pfam" id="PF02885">
    <property type="entry name" value="Glycos_trans_3N"/>
    <property type="match status" value="1"/>
</dbReference>
<dbReference type="Pfam" id="PF00591">
    <property type="entry name" value="Glycos_transf_3"/>
    <property type="match status" value="1"/>
</dbReference>
<dbReference type="Pfam" id="PF07831">
    <property type="entry name" value="PYNP_C"/>
    <property type="match status" value="1"/>
</dbReference>
<dbReference type="SMART" id="SM00941">
    <property type="entry name" value="PYNP_C"/>
    <property type="match status" value="1"/>
</dbReference>
<dbReference type="SUPFAM" id="SSF52418">
    <property type="entry name" value="Nucleoside phosphorylase/phosphoribosyltransferase catalytic domain"/>
    <property type="match status" value="1"/>
</dbReference>
<dbReference type="SUPFAM" id="SSF47648">
    <property type="entry name" value="Nucleoside phosphorylase/phosphoribosyltransferase N-terminal domain"/>
    <property type="match status" value="1"/>
</dbReference>
<dbReference type="SUPFAM" id="SSF54680">
    <property type="entry name" value="Pyrimidine nucleoside phosphorylase C-terminal domain"/>
    <property type="match status" value="1"/>
</dbReference>
<dbReference type="PROSITE" id="PS00647">
    <property type="entry name" value="THYMID_PHOSPHORYLASE"/>
    <property type="match status" value="1"/>
</dbReference>
<keyword id="KW-0328">Glycosyltransferase</keyword>
<keyword id="KW-1185">Reference proteome</keyword>
<keyword id="KW-0808">Transferase</keyword>
<proteinExistence type="inferred from homology"/>
<name>AMPPA_METHJ</name>
<sequence>MRLTVRLVDIAARGILLHHNDAKSLGVLAGDRIVISSPVTGKATVDYVETTGTLIDQGRIGVYHHTNEQLTLTENEVVEVRVADRPVSLDYIKKKMEGEKLTREDIRAIVADIVQDTLSPSEITAFVVSSYINQLDMDEIESLTRAMVETGDQLSFHAGPIVDKHSIGGVPGNKISLIVVPIIAASGLLIPKTSSRAITGAGGTADLMEVLAPVEFSASEVQEMTIKTGGVIVWGGATNIAPADDKIIIQEYPFKIDQIGQMIASVMAKKFAVGADVVAIDIPVGKYCKVHTIEEGKKLARQFIDLGERLNMRVECALTYGDAPVGRAIGPKLEIKEALSVLEGSDSPRSLIQKSCVIAGIALELAGKANRGEGANLALEILRSGKALKKFLDIIAVQGGTPDVSSEKITVGEHFYTVRADSTGYVIDLNNHSLITIARTAGAPADHGAGLYLHAKHGTSLSKGDPIFTIYADRKWRLEKAIEEARRLRPVMVEGMLIDRVPNVREWVPGRSRNLE</sequence>
<gene>
    <name type="ordered locus">Mhun_2262</name>
</gene>
<accession>Q2FTS5</accession>
<comment type="function">
    <text evidence="1">Catalyzes the conversion of AMP and phosphate to adenine and ribose 1,5-bisphosphate (R15P). Exhibits phosphorylase activity toward CMP and UMP in addition to AMP. Functions in an archaeal AMP degradation pathway, together with R15P isomerase and RubisCO.</text>
</comment>
<comment type="catalytic activity">
    <reaction evidence="1">
        <text>AMP + phosphate = alpha-D-ribose 1,5-bisphosphate + adenine</text>
        <dbReference type="Rhea" id="RHEA:36975"/>
        <dbReference type="ChEBI" id="CHEBI:16708"/>
        <dbReference type="ChEBI" id="CHEBI:43474"/>
        <dbReference type="ChEBI" id="CHEBI:68688"/>
        <dbReference type="ChEBI" id="CHEBI:456215"/>
        <dbReference type="EC" id="2.4.2.57"/>
    </reaction>
</comment>
<comment type="catalytic activity">
    <reaction evidence="1">
        <text>CMP + phosphate = cytosine + alpha-D-ribose 1,5-bisphosphate</text>
        <dbReference type="Rhea" id="RHEA:36987"/>
        <dbReference type="ChEBI" id="CHEBI:16040"/>
        <dbReference type="ChEBI" id="CHEBI:43474"/>
        <dbReference type="ChEBI" id="CHEBI:60377"/>
        <dbReference type="ChEBI" id="CHEBI:68688"/>
        <dbReference type="EC" id="2.4.2.57"/>
    </reaction>
</comment>
<comment type="catalytic activity">
    <reaction evidence="1">
        <text>UMP + phosphate = alpha-D-ribose 1,5-bisphosphate + uracil</text>
        <dbReference type="Rhea" id="RHEA:36991"/>
        <dbReference type="ChEBI" id="CHEBI:17568"/>
        <dbReference type="ChEBI" id="CHEBI:43474"/>
        <dbReference type="ChEBI" id="CHEBI:57865"/>
        <dbReference type="ChEBI" id="CHEBI:68688"/>
        <dbReference type="EC" id="2.4.2.57"/>
    </reaction>
</comment>
<comment type="similarity">
    <text evidence="1">Belongs to the thymidine/pyrimidine-nucleoside phosphorylase family. Type 2 subfamily.</text>
</comment>
<evidence type="ECO:0000255" key="1">
    <source>
        <dbReference type="HAMAP-Rule" id="MF_02132"/>
    </source>
</evidence>
<protein>
    <recommendedName>
        <fullName evidence="1">AMP phosphorylase</fullName>
        <shortName evidence="1">AMPpase</shortName>
        <ecNumber evidence="1">2.4.2.57</ecNumber>
    </recommendedName>
    <alternativeName>
        <fullName evidence="1">Nucleoside monophosphate phosphorylase</fullName>
        <shortName evidence="1">NMP phosphorylase</shortName>
    </alternativeName>
</protein>
<organism>
    <name type="scientific">Methanospirillum hungatei JF-1 (strain ATCC 27890 / DSM 864 / NBRC 100397 / JF-1)</name>
    <dbReference type="NCBI Taxonomy" id="323259"/>
    <lineage>
        <taxon>Archaea</taxon>
        <taxon>Methanobacteriati</taxon>
        <taxon>Methanobacteriota</taxon>
        <taxon>Stenosarchaea group</taxon>
        <taxon>Methanomicrobia</taxon>
        <taxon>Methanomicrobiales</taxon>
        <taxon>Methanospirillaceae</taxon>
        <taxon>Methanospirillum</taxon>
    </lineage>
</organism>